<organism>
    <name type="scientific">Laribacter hongkongensis (strain HLHK9)</name>
    <dbReference type="NCBI Taxonomy" id="557598"/>
    <lineage>
        <taxon>Bacteria</taxon>
        <taxon>Pseudomonadati</taxon>
        <taxon>Pseudomonadota</taxon>
        <taxon>Betaproteobacteria</taxon>
        <taxon>Neisseriales</taxon>
        <taxon>Aquaspirillaceae</taxon>
        <taxon>Laribacter</taxon>
    </lineage>
</organism>
<reference key="1">
    <citation type="journal article" date="2009" name="PLoS Genet.">
        <title>The complete genome and proteome of Laribacter hongkongensis reveal potential mechanisms for adaptations to different temperatures and habitats.</title>
        <authorList>
            <person name="Woo P.C.Y."/>
            <person name="Lau S.K.P."/>
            <person name="Tse H."/>
            <person name="Teng J.L.L."/>
            <person name="Curreem S.O."/>
            <person name="Tsang A.K.L."/>
            <person name="Fan R.Y.Y."/>
            <person name="Wong G.K.M."/>
            <person name="Huang Y."/>
            <person name="Loman N.J."/>
            <person name="Snyder L.A.S."/>
            <person name="Cai J.J."/>
            <person name="Huang J.-D."/>
            <person name="Mak W."/>
            <person name="Pallen M.J."/>
            <person name="Lok S."/>
            <person name="Yuen K.-Y."/>
        </authorList>
    </citation>
    <scope>NUCLEOTIDE SEQUENCE [LARGE SCALE GENOMIC DNA]</scope>
    <source>
        <strain>HLHK9</strain>
    </source>
</reference>
<feature type="chain" id="PRO_1000197757" description="Putative membrane protein insertion efficiency factor">
    <location>
        <begin position="1"/>
        <end position="69"/>
    </location>
</feature>
<sequence>MSRIVLALIRFYQLAISPWLPPRCRYQPTCSQYAIEAVQKHGALKGGWLALRRIGRCHPWGSSGYDPVP</sequence>
<gene>
    <name type="ordered locus">LHK_03237</name>
</gene>
<accession>C1D6H9</accession>
<dbReference type="EMBL" id="CP001154">
    <property type="protein sequence ID" value="ACO76214.1"/>
    <property type="molecule type" value="Genomic_DNA"/>
</dbReference>
<dbReference type="STRING" id="557598.LHK_03237"/>
<dbReference type="KEGG" id="lhk:LHK_03237"/>
<dbReference type="eggNOG" id="COG0759">
    <property type="taxonomic scope" value="Bacteria"/>
</dbReference>
<dbReference type="HOGENOM" id="CLU_144811_6_1_4"/>
<dbReference type="Proteomes" id="UP000002010">
    <property type="component" value="Chromosome"/>
</dbReference>
<dbReference type="GO" id="GO:0005886">
    <property type="term" value="C:plasma membrane"/>
    <property type="evidence" value="ECO:0007669"/>
    <property type="project" value="UniProtKB-SubCell"/>
</dbReference>
<dbReference type="HAMAP" id="MF_00386">
    <property type="entry name" value="UPF0161_YidD"/>
    <property type="match status" value="1"/>
</dbReference>
<dbReference type="InterPro" id="IPR002696">
    <property type="entry name" value="Membr_insert_effic_factor_YidD"/>
</dbReference>
<dbReference type="NCBIfam" id="TIGR00278">
    <property type="entry name" value="membrane protein insertion efficiency factor YidD"/>
    <property type="match status" value="1"/>
</dbReference>
<dbReference type="PANTHER" id="PTHR33383">
    <property type="entry name" value="MEMBRANE PROTEIN INSERTION EFFICIENCY FACTOR-RELATED"/>
    <property type="match status" value="1"/>
</dbReference>
<dbReference type="PANTHER" id="PTHR33383:SF1">
    <property type="entry name" value="MEMBRANE PROTEIN INSERTION EFFICIENCY FACTOR-RELATED"/>
    <property type="match status" value="1"/>
</dbReference>
<dbReference type="Pfam" id="PF01809">
    <property type="entry name" value="YidD"/>
    <property type="match status" value="1"/>
</dbReference>
<dbReference type="SMART" id="SM01234">
    <property type="entry name" value="Haemolytic"/>
    <property type="match status" value="1"/>
</dbReference>
<comment type="function">
    <text evidence="1">Could be involved in insertion of integral membrane proteins into the membrane.</text>
</comment>
<comment type="subcellular location">
    <subcellularLocation>
        <location evidence="1">Cell inner membrane</location>
        <topology evidence="1">Peripheral membrane protein</topology>
        <orientation evidence="1">Cytoplasmic side</orientation>
    </subcellularLocation>
</comment>
<comment type="similarity">
    <text evidence="1">Belongs to the UPF0161 family.</text>
</comment>
<name>YIDD_LARHH</name>
<keyword id="KW-0997">Cell inner membrane</keyword>
<keyword id="KW-1003">Cell membrane</keyword>
<keyword id="KW-0472">Membrane</keyword>
<keyword id="KW-1185">Reference proteome</keyword>
<protein>
    <recommendedName>
        <fullName evidence="1">Putative membrane protein insertion efficiency factor</fullName>
    </recommendedName>
</protein>
<evidence type="ECO:0000255" key="1">
    <source>
        <dbReference type="HAMAP-Rule" id="MF_00386"/>
    </source>
</evidence>
<proteinExistence type="inferred from homology"/>